<gene>
    <name type="primary">yicG</name>
    <name type="ordered locus">SF3685</name>
    <name type="ordered locus">S4083</name>
</gene>
<dbReference type="EMBL" id="AE005674">
    <property type="protein sequence ID" value="AAN45132.1"/>
    <property type="status" value="ALT_INIT"/>
    <property type="molecule type" value="Genomic_DNA"/>
</dbReference>
<dbReference type="EMBL" id="AE014073">
    <property type="protein sequence ID" value="AAP19060.1"/>
    <property type="status" value="ALT_INIT"/>
    <property type="molecule type" value="Genomic_DNA"/>
</dbReference>
<dbReference type="RefSeq" id="NP_709425.1">
    <property type="nucleotide sequence ID" value="NC_004337.2"/>
</dbReference>
<dbReference type="RefSeq" id="WP_000924289.1">
    <property type="nucleotide sequence ID" value="NZ_WPGW01000042.1"/>
</dbReference>
<dbReference type="SMR" id="P0AGM4"/>
<dbReference type="STRING" id="198214.SF3685"/>
<dbReference type="PaxDb" id="198214-SF3685"/>
<dbReference type="GeneID" id="1026237"/>
<dbReference type="KEGG" id="sfl:SF3685"/>
<dbReference type="KEGG" id="sfx:S4083"/>
<dbReference type="PATRIC" id="fig|198214.7.peg.4349"/>
<dbReference type="HOGENOM" id="CLU_064906_2_0_6"/>
<dbReference type="Proteomes" id="UP000001006">
    <property type="component" value="Chromosome"/>
</dbReference>
<dbReference type="Proteomes" id="UP000002673">
    <property type="component" value="Chromosome"/>
</dbReference>
<dbReference type="GO" id="GO:0005886">
    <property type="term" value="C:plasma membrane"/>
    <property type="evidence" value="ECO:0007669"/>
    <property type="project" value="UniProtKB-SubCell"/>
</dbReference>
<dbReference type="InterPro" id="IPR005115">
    <property type="entry name" value="Gly_transporter"/>
</dbReference>
<dbReference type="PANTHER" id="PTHR30506">
    <property type="entry name" value="INNER MEMBRANE PROTEIN"/>
    <property type="match status" value="1"/>
</dbReference>
<dbReference type="PANTHER" id="PTHR30506:SF3">
    <property type="entry name" value="UPF0126 INNER MEMBRANE PROTEIN YADS-RELATED"/>
    <property type="match status" value="1"/>
</dbReference>
<dbReference type="Pfam" id="PF03458">
    <property type="entry name" value="Gly_transporter"/>
    <property type="match status" value="2"/>
</dbReference>
<evidence type="ECO:0000250" key="1"/>
<evidence type="ECO:0000255" key="2"/>
<evidence type="ECO:0000305" key="3"/>
<keyword id="KW-0997">Cell inner membrane</keyword>
<keyword id="KW-1003">Cell membrane</keyword>
<keyword id="KW-0472">Membrane</keyword>
<keyword id="KW-1185">Reference proteome</keyword>
<keyword id="KW-0812">Transmembrane</keyword>
<keyword id="KW-1133">Transmembrane helix</keyword>
<organism>
    <name type="scientific">Shigella flexneri</name>
    <dbReference type="NCBI Taxonomy" id="623"/>
    <lineage>
        <taxon>Bacteria</taxon>
        <taxon>Pseudomonadati</taxon>
        <taxon>Pseudomonadota</taxon>
        <taxon>Gammaproteobacteria</taxon>
        <taxon>Enterobacterales</taxon>
        <taxon>Enterobacteriaceae</taxon>
        <taxon>Shigella</taxon>
    </lineage>
</organism>
<accession>P0AGM4</accession>
<accession>P31432</accession>
<accession>P76720</accession>
<proteinExistence type="inferred from homology"/>
<sequence>MLLHILYLVGITAEAMTGALAAGRRRMDTFGVIIIATATAIGGGSVRDILLGHYPLGWVKHPEYVIIVATAAVLTTIVAPVMPYLRKVFLVLDALGLVVFSIIGAQVALDMGHGPIIAVVAAVTTGVFGGVLRDMFCKRIPLVFQKELYAGVSFASAVLYIALQHYVSNHDVVIISTLVFGFFARLLALRLKLGLPVFYYSHEGH</sequence>
<feature type="chain" id="PRO_0000166301" description="UPF0126 inner membrane protein YicG">
    <location>
        <begin position="1"/>
        <end position="205"/>
    </location>
</feature>
<feature type="topological domain" description="Cytoplasmic" evidence="2">
    <location>
        <begin position="1"/>
        <end position="29"/>
    </location>
</feature>
<feature type="transmembrane region" description="Helical" evidence="2">
    <location>
        <begin position="30"/>
        <end position="50"/>
    </location>
</feature>
<feature type="topological domain" description="Periplasmic" evidence="2">
    <location>
        <begin position="51"/>
        <end position="64"/>
    </location>
</feature>
<feature type="transmembrane region" description="Helical" evidence="2">
    <location>
        <begin position="65"/>
        <end position="85"/>
    </location>
</feature>
<feature type="topological domain" description="Cytoplasmic" evidence="2">
    <location>
        <begin position="86"/>
        <end position="87"/>
    </location>
</feature>
<feature type="transmembrane region" description="Helical" evidence="2">
    <location>
        <begin position="88"/>
        <end position="108"/>
    </location>
</feature>
<feature type="topological domain" description="Periplasmic" evidence="2">
    <location>
        <begin position="109"/>
        <end position="111"/>
    </location>
</feature>
<feature type="transmembrane region" description="Helical" evidence="2">
    <location>
        <begin position="112"/>
        <end position="132"/>
    </location>
</feature>
<feature type="topological domain" description="Cytoplasmic" evidence="2">
    <location>
        <begin position="133"/>
        <end position="147"/>
    </location>
</feature>
<feature type="transmembrane region" description="Helical" evidence="2">
    <location>
        <begin position="148"/>
        <end position="168"/>
    </location>
</feature>
<feature type="transmembrane region" description="Helical" evidence="2">
    <location>
        <begin position="169"/>
        <end position="189"/>
    </location>
</feature>
<feature type="topological domain" description="Cytoplasmic" evidence="2">
    <location>
        <begin position="190"/>
        <end position="205"/>
    </location>
</feature>
<comment type="subcellular location">
    <subcellularLocation>
        <location evidence="1">Cell inner membrane</location>
        <topology evidence="1">Multi-pass membrane protein</topology>
    </subcellularLocation>
</comment>
<comment type="similarity">
    <text evidence="3">Belongs to the UPF0126 family.</text>
</comment>
<comment type="sequence caution" evidence="3">
    <conflict type="erroneous initiation">
        <sequence resource="EMBL-CDS" id="AAN45132"/>
    </conflict>
</comment>
<comment type="sequence caution" evidence="3">
    <conflict type="erroneous initiation">
        <sequence resource="EMBL-CDS" id="AAP19060"/>
    </conflict>
</comment>
<protein>
    <recommendedName>
        <fullName>UPF0126 inner membrane protein YicG</fullName>
    </recommendedName>
</protein>
<reference key="1">
    <citation type="journal article" date="2002" name="Nucleic Acids Res.">
        <title>Genome sequence of Shigella flexneri 2a: insights into pathogenicity through comparison with genomes of Escherichia coli K12 and O157.</title>
        <authorList>
            <person name="Jin Q."/>
            <person name="Yuan Z."/>
            <person name="Xu J."/>
            <person name="Wang Y."/>
            <person name="Shen Y."/>
            <person name="Lu W."/>
            <person name="Wang J."/>
            <person name="Liu H."/>
            <person name="Yang J."/>
            <person name="Yang F."/>
            <person name="Zhang X."/>
            <person name="Zhang J."/>
            <person name="Yang G."/>
            <person name="Wu H."/>
            <person name="Qu D."/>
            <person name="Dong J."/>
            <person name="Sun L."/>
            <person name="Xue Y."/>
            <person name="Zhao A."/>
            <person name="Gao Y."/>
            <person name="Zhu J."/>
            <person name="Kan B."/>
            <person name="Ding K."/>
            <person name="Chen S."/>
            <person name="Cheng H."/>
            <person name="Yao Z."/>
            <person name="He B."/>
            <person name="Chen R."/>
            <person name="Ma D."/>
            <person name="Qiang B."/>
            <person name="Wen Y."/>
            <person name="Hou Y."/>
            <person name="Yu J."/>
        </authorList>
    </citation>
    <scope>NUCLEOTIDE SEQUENCE [LARGE SCALE GENOMIC DNA]</scope>
    <source>
        <strain>301 / Serotype 2a</strain>
    </source>
</reference>
<reference key="2">
    <citation type="journal article" date="2003" name="Infect. Immun.">
        <title>Complete genome sequence and comparative genomics of Shigella flexneri serotype 2a strain 2457T.</title>
        <authorList>
            <person name="Wei J."/>
            <person name="Goldberg M.B."/>
            <person name="Burland V."/>
            <person name="Venkatesan M.M."/>
            <person name="Deng W."/>
            <person name="Fournier G."/>
            <person name="Mayhew G.F."/>
            <person name="Plunkett G. III"/>
            <person name="Rose D.J."/>
            <person name="Darling A."/>
            <person name="Mau B."/>
            <person name="Perna N.T."/>
            <person name="Payne S.M."/>
            <person name="Runyen-Janecky L.J."/>
            <person name="Zhou S."/>
            <person name="Schwartz D.C."/>
            <person name="Blattner F.R."/>
        </authorList>
    </citation>
    <scope>NUCLEOTIDE SEQUENCE [LARGE SCALE GENOMIC DNA]</scope>
    <source>
        <strain>ATCC 700930 / 2457T / Serotype 2a</strain>
    </source>
</reference>
<name>YICG_SHIFL</name>